<comment type="function">
    <text evidence="1">Part of the ABC transporter complex CcmAB involved in the biogenesis of c-type cytochromes; once thought to export heme, this seems not to be the case, but its exact role is uncertain. Responsible for energy coupling to the transport system.</text>
</comment>
<comment type="catalytic activity">
    <reaction evidence="1">
        <text>heme b(in) + ATP + H2O = heme b(out) + ADP + phosphate + H(+)</text>
        <dbReference type="Rhea" id="RHEA:19261"/>
        <dbReference type="ChEBI" id="CHEBI:15377"/>
        <dbReference type="ChEBI" id="CHEBI:15378"/>
        <dbReference type="ChEBI" id="CHEBI:30616"/>
        <dbReference type="ChEBI" id="CHEBI:43474"/>
        <dbReference type="ChEBI" id="CHEBI:60344"/>
        <dbReference type="ChEBI" id="CHEBI:456216"/>
        <dbReference type="EC" id="7.6.2.5"/>
    </reaction>
</comment>
<comment type="subunit">
    <text evidence="1">The complex is composed of two ATP-binding proteins (CcmA) and two transmembrane proteins (CcmB).</text>
</comment>
<comment type="subcellular location">
    <subcellularLocation>
        <location evidence="1">Cell inner membrane</location>
        <topology evidence="1">Peripheral membrane protein</topology>
    </subcellularLocation>
</comment>
<comment type="similarity">
    <text evidence="1">Belongs to the ABC transporter superfamily. CcmA exporter (TC 3.A.1.107) family.</text>
</comment>
<name>CCMA_PSEPF</name>
<protein>
    <recommendedName>
        <fullName evidence="1">Cytochrome c biogenesis ATP-binding export protein CcmA</fullName>
        <ecNumber evidence="1">7.6.2.5</ecNumber>
    </recommendedName>
    <alternativeName>
        <fullName evidence="1">Heme exporter protein A</fullName>
    </alternativeName>
</protein>
<proteinExistence type="inferred from homology"/>
<feature type="chain" id="PRO_0000271940" description="Cytochrome c biogenesis ATP-binding export protein CcmA">
    <location>
        <begin position="1"/>
        <end position="211"/>
    </location>
</feature>
<feature type="domain" description="ABC transporter" evidence="1">
    <location>
        <begin position="6"/>
        <end position="211"/>
    </location>
</feature>
<feature type="binding site" evidence="1">
    <location>
        <begin position="38"/>
        <end position="45"/>
    </location>
    <ligand>
        <name>ATP</name>
        <dbReference type="ChEBI" id="CHEBI:30616"/>
    </ligand>
</feature>
<dbReference type="EC" id="7.6.2.5" evidence="1"/>
<dbReference type="EMBL" id="CP000094">
    <property type="protein sequence ID" value="ABA73320.1"/>
    <property type="molecule type" value="Genomic_DNA"/>
</dbReference>
<dbReference type="RefSeq" id="WP_011333082.1">
    <property type="nucleotide sequence ID" value="NC_007492.2"/>
</dbReference>
<dbReference type="SMR" id="Q3KFY6"/>
<dbReference type="KEGG" id="pfo:Pfl01_1577"/>
<dbReference type="eggNOG" id="COG4133">
    <property type="taxonomic scope" value="Bacteria"/>
</dbReference>
<dbReference type="HOGENOM" id="CLU_000604_1_2_6"/>
<dbReference type="Proteomes" id="UP000002704">
    <property type="component" value="Chromosome"/>
</dbReference>
<dbReference type="GO" id="GO:0005886">
    <property type="term" value="C:plasma membrane"/>
    <property type="evidence" value="ECO:0007669"/>
    <property type="project" value="UniProtKB-SubCell"/>
</dbReference>
<dbReference type="GO" id="GO:0015439">
    <property type="term" value="F:ABC-type heme transporter activity"/>
    <property type="evidence" value="ECO:0007669"/>
    <property type="project" value="UniProtKB-EC"/>
</dbReference>
<dbReference type="GO" id="GO:0005524">
    <property type="term" value="F:ATP binding"/>
    <property type="evidence" value="ECO:0007669"/>
    <property type="project" value="UniProtKB-KW"/>
</dbReference>
<dbReference type="GO" id="GO:0016887">
    <property type="term" value="F:ATP hydrolysis activity"/>
    <property type="evidence" value="ECO:0007669"/>
    <property type="project" value="InterPro"/>
</dbReference>
<dbReference type="GO" id="GO:0017004">
    <property type="term" value="P:cytochrome complex assembly"/>
    <property type="evidence" value="ECO:0007669"/>
    <property type="project" value="UniProtKB-KW"/>
</dbReference>
<dbReference type="CDD" id="cd03231">
    <property type="entry name" value="ABC_CcmA_heme_exporter"/>
    <property type="match status" value="1"/>
</dbReference>
<dbReference type="Gene3D" id="3.40.50.300">
    <property type="entry name" value="P-loop containing nucleotide triphosphate hydrolases"/>
    <property type="match status" value="1"/>
</dbReference>
<dbReference type="InterPro" id="IPR003593">
    <property type="entry name" value="AAA+_ATPase"/>
</dbReference>
<dbReference type="InterPro" id="IPR003439">
    <property type="entry name" value="ABC_transporter-like_ATP-bd"/>
</dbReference>
<dbReference type="InterPro" id="IPR017871">
    <property type="entry name" value="ABC_transporter-like_CS"/>
</dbReference>
<dbReference type="InterPro" id="IPR005895">
    <property type="entry name" value="ABC_transptr_haem_export_CcmA"/>
</dbReference>
<dbReference type="InterPro" id="IPR027417">
    <property type="entry name" value="P-loop_NTPase"/>
</dbReference>
<dbReference type="NCBIfam" id="TIGR01189">
    <property type="entry name" value="ccmA"/>
    <property type="match status" value="1"/>
</dbReference>
<dbReference type="NCBIfam" id="NF010061">
    <property type="entry name" value="PRK13538.1"/>
    <property type="match status" value="1"/>
</dbReference>
<dbReference type="PANTHER" id="PTHR43499">
    <property type="entry name" value="ABC TRANSPORTER I FAMILY MEMBER 1"/>
    <property type="match status" value="1"/>
</dbReference>
<dbReference type="PANTHER" id="PTHR43499:SF1">
    <property type="entry name" value="ABC TRANSPORTER I FAMILY MEMBER 1"/>
    <property type="match status" value="1"/>
</dbReference>
<dbReference type="Pfam" id="PF00005">
    <property type="entry name" value="ABC_tran"/>
    <property type="match status" value="1"/>
</dbReference>
<dbReference type="SMART" id="SM00382">
    <property type="entry name" value="AAA"/>
    <property type="match status" value="1"/>
</dbReference>
<dbReference type="SUPFAM" id="SSF52540">
    <property type="entry name" value="P-loop containing nucleoside triphosphate hydrolases"/>
    <property type="match status" value="1"/>
</dbReference>
<dbReference type="PROSITE" id="PS00211">
    <property type="entry name" value="ABC_TRANSPORTER_1"/>
    <property type="match status" value="1"/>
</dbReference>
<dbReference type="PROSITE" id="PS50893">
    <property type="entry name" value="ABC_TRANSPORTER_2"/>
    <property type="match status" value="1"/>
</dbReference>
<dbReference type="PROSITE" id="PS51243">
    <property type="entry name" value="CCMA"/>
    <property type="match status" value="1"/>
</dbReference>
<sequence length="211" mass="23047">MTSPVLQTVALACERDLRLLFDNLELRLASGDMVQISGPNGSGKTSLLRLLAGLMQPTDGQVLLNGKPLGEQRSELARNLLWIGHAAGIKDLLTPEENLTWLCALHQPAERDAIWQALAAVGLRGFEDVPCHSLSAGQQRRVALARLYLDSPPLWILDEPFTALDKQGVAQLEEHLAGHCERGGLVVLTTHHTLSRMPAGYRDIDLGNWAV</sequence>
<evidence type="ECO:0000255" key="1">
    <source>
        <dbReference type="HAMAP-Rule" id="MF_01707"/>
    </source>
</evidence>
<organism>
    <name type="scientific">Pseudomonas fluorescens (strain Pf0-1)</name>
    <dbReference type="NCBI Taxonomy" id="205922"/>
    <lineage>
        <taxon>Bacteria</taxon>
        <taxon>Pseudomonadati</taxon>
        <taxon>Pseudomonadota</taxon>
        <taxon>Gammaproteobacteria</taxon>
        <taxon>Pseudomonadales</taxon>
        <taxon>Pseudomonadaceae</taxon>
        <taxon>Pseudomonas</taxon>
    </lineage>
</organism>
<reference key="1">
    <citation type="journal article" date="2009" name="Genome Biol.">
        <title>Genomic and genetic analyses of diversity and plant interactions of Pseudomonas fluorescens.</title>
        <authorList>
            <person name="Silby M.W."/>
            <person name="Cerdeno-Tarraga A.M."/>
            <person name="Vernikos G.S."/>
            <person name="Giddens S.R."/>
            <person name="Jackson R.W."/>
            <person name="Preston G.M."/>
            <person name="Zhang X.-X."/>
            <person name="Moon C.D."/>
            <person name="Gehrig S.M."/>
            <person name="Godfrey S.A.C."/>
            <person name="Knight C.G."/>
            <person name="Malone J.G."/>
            <person name="Robinson Z."/>
            <person name="Spiers A.J."/>
            <person name="Harris S."/>
            <person name="Challis G.L."/>
            <person name="Yaxley A.M."/>
            <person name="Harris D."/>
            <person name="Seeger K."/>
            <person name="Murphy L."/>
            <person name="Rutter S."/>
            <person name="Squares R."/>
            <person name="Quail M.A."/>
            <person name="Saunders E."/>
            <person name="Mavromatis K."/>
            <person name="Brettin T.S."/>
            <person name="Bentley S.D."/>
            <person name="Hothersall J."/>
            <person name="Stephens E."/>
            <person name="Thomas C.M."/>
            <person name="Parkhill J."/>
            <person name="Levy S.B."/>
            <person name="Rainey P.B."/>
            <person name="Thomson N.R."/>
        </authorList>
    </citation>
    <scope>NUCLEOTIDE SEQUENCE [LARGE SCALE GENOMIC DNA]</scope>
    <source>
        <strain>Pf0-1</strain>
    </source>
</reference>
<gene>
    <name evidence="1" type="primary">ccmA</name>
    <name type="ordered locus">Pfl01_1577</name>
</gene>
<accession>Q3KFY6</accession>
<keyword id="KW-0067">ATP-binding</keyword>
<keyword id="KW-0997">Cell inner membrane</keyword>
<keyword id="KW-1003">Cell membrane</keyword>
<keyword id="KW-0201">Cytochrome c-type biogenesis</keyword>
<keyword id="KW-0472">Membrane</keyword>
<keyword id="KW-0547">Nucleotide-binding</keyword>
<keyword id="KW-1278">Translocase</keyword>
<keyword id="KW-0813">Transport</keyword>